<gene>
    <name type="primary">ncaldb</name>
    <name type="synonym">ncald</name>
    <name type="ORF">si:dkey-21k18.3</name>
    <name type="ORF">zgc:100982</name>
</gene>
<dbReference type="EMBL" id="BX294657">
    <property type="protein sequence ID" value="CAK05449.1"/>
    <property type="molecule type" value="Genomic_DNA"/>
</dbReference>
<dbReference type="EMBL" id="BC079490">
    <property type="protein sequence ID" value="AAH79490.1"/>
    <property type="molecule type" value="mRNA"/>
</dbReference>
<dbReference type="RefSeq" id="NP_001003776.1">
    <property type="nucleotide sequence ID" value="NM_001003776.1"/>
</dbReference>
<dbReference type="RefSeq" id="XP_005159642.1">
    <property type="nucleotide sequence ID" value="XM_005159585.4"/>
</dbReference>
<dbReference type="RefSeq" id="XP_005159643.1">
    <property type="nucleotide sequence ID" value="XM_005159586.5"/>
</dbReference>
<dbReference type="RefSeq" id="XP_009292375.1">
    <property type="nucleotide sequence ID" value="XM_009294100.4"/>
</dbReference>
<dbReference type="SMR" id="Q6AXL4"/>
<dbReference type="FunCoup" id="Q6AXL4">
    <property type="interactions" value="11"/>
</dbReference>
<dbReference type="STRING" id="7955.ENSDARP00000109673"/>
<dbReference type="PaxDb" id="7955-ENSDARP00000125940"/>
<dbReference type="Ensembl" id="ENSDART00000016128">
    <property type="protein sequence ID" value="ENSDARP00000019433"/>
    <property type="gene ID" value="ENSDARG00000011334"/>
</dbReference>
<dbReference type="Ensembl" id="ENSDART00000122192">
    <property type="protein sequence ID" value="ENSDARP00000109673"/>
    <property type="gene ID" value="ENSDARG00000011334"/>
</dbReference>
<dbReference type="Ensembl" id="ENSDART00000151158">
    <property type="protein sequence ID" value="ENSDARP00000125961"/>
    <property type="gene ID" value="ENSDARG00000011334"/>
</dbReference>
<dbReference type="GeneID" id="445319"/>
<dbReference type="KEGG" id="dre:445319"/>
<dbReference type="AGR" id="ZFIN:ZDB-GENE-040808-37"/>
<dbReference type="CTD" id="445319"/>
<dbReference type="ZFIN" id="ZDB-GENE-040808-37">
    <property type="gene designation" value="ncaldb"/>
</dbReference>
<dbReference type="eggNOG" id="KOG0044">
    <property type="taxonomic scope" value="Eukaryota"/>
</dbReference>
<dbReference type="HOGENOM" id="CLU_072366_1_0_1"/>
<dbReference type="InParanoid" id="Q6AXL4"/>
<dbReference type="OMA" id="YKMVSAV"/>
<dbReference type="OrthoDB" id="191686at2759"/>
<dbReference type="PhylomeDB" id="Q6AXL4"/>
<dbReference type="TreeFam" id="TF300009"/>
<dbReference type="PRO" id="PR:Q6AXL4"/>
<dbReference type="Proteomes" id="UP000000437">
    <property type="component" value="Chromosome 19"/>
</dbReference>
<dbReference type="Bgee" id="ENSDARG00000011334">
    <property type="expression patterns" value="Expressed in retina and 16 other cell types or tissues"/>
</dbReference>
<dbReference type="GO" id="GO:0003779">
    <property type="term" value="F:actin binding"/>
    <property type="evidence" value="ECO:0000318"/>
    <property type="project" value="GO_Central"/>
</dbReference>
<dbReference type="GO" id="GO:0005509">
    <property type="term" value="F:calcium ion binding"/>
    <property type="evidence" value="ECO:0000318"/>
    <property type="project" value="GO_Central"/>
</dbReference>
<dbReference type="GO" id="GO:0015631">
    <property type="term" value="F:tubulin binding"/>
    <property type="evidence" value="ECO:0000318"/>
    <property type="project" value="GO_Central"/>
</dbReference>
<dbReference type="GO" id="GO:0019722">
    <property type="term" value="P:calcium-mediated signaling"/>
    <property type="evidence" value="ECO:0000318"/>
    <property type="project" value="GO_Central"/>
</dbReference>
<dbReference type="GO" id="GO:0048841">
    <property type="term" value="P:regulation of axon extension involved in axon guidance"/>
    <property type="evidence" value="ECO:0000316"/>
    <property type="project" value="ZFIN"/>
</dbReference>
<dbReference type="GO" id="GO:0009966">
    <property type="term" value="P:regulation of signal transduction"/>
    <property type="evidence" value="ECO:0000318"/>
    <property type="project" value="GO_Central"/>
</dbReference>
<dbReference type="CDD" id="cd00051">
    <property type="entry name" value="EFh"/>
    <property type="match status" value="2"/>
</dbReference>
<dbReference type="FunFam" id="1.10.238.10:FF:000009">
    <property type="entry name" value="Visinin-like protein 1"/>
    <property type="match status" value="1"/>
</dbReference>
<dbReference type="Gene3D" id="1.10.238.10">
    <property type="entry name" value="EF-hand"/>
    <property type="match status" value="1"/>
</dbReference>
<dbReference type="InterPro" id="IPR011992">
    <property type="entry name" value="EF-hand-dom_pair"/>
</dbReference>
<dbReference type="InterPro" id="IPR018247">
    <property type="entry name" value="EF_Hand_1_Ca_BS"/>
</dbReference>
<dbReference type="InterPro" id="IPR002048">
    <property type="entry name" value="EF_hand_dom"/>
</dbReference>
<dbReference type="InterPro" id="IPR028846">
    <property type="entry name" value="Recoverin"/>
</dbReference>
<dbReference type="PANTHER" id="PTHR23055">
    <property type="entry name" value="CALCIUM BINDING PROTEINS"/>
    <property type="match status" value="1"/>
</dbReference>
<dbReference type="PANTHER" id="PTHR23055:SF64">
    <property type="entry name" value="NEUROCALCIN-DELTA B"/>
    <property type="match status" value="1"/>
</dbReference>
<dbReference type="Pfam" id="PF00036">
    <property type="entry name" value="EF-hand_1"/>
    <property type="match status" value="1"/>
</dbReference>
<dbReference type="Pfam" id="PF13499">
    <property type="entry name" value="EF-hand_7"/>
    <property type="match status" value="1"/>
</dbReference>
<dbReference type="PRINTS" id="PR00450">
    <property type="entry name" value="RECOVERIN"/>
</dbReference>
<dbReference type="SMART" id="SM00054">
    <property type="entry name" value="EFh"/>
    <property type="match status" value="3"/>
</dbReference>
<dbReference type="SUPFAM" id="SSF47473">
    <property type="entry name" value="EF-hand"/>
    <property type="match status" value="1"/>
</dbReference>
<dbReference type="PROSITE" id="PS00018">
    <property type="entry name" value="EF_HAND_1"/>
    <property type="match status" value="3"/>
</dbReference>
<dbReference type="PROSITE" id="PS50222">
    <property type="entry name" value="EF_HAND_2"/>
    <property type="match status" value="3"/>
</dbReference>
<comment type="function">
    <text evidence="1">May be involved in the calcium-dependent regulation of rhodopsin phosphorylation. Binds three calcium ions (By similarity).</text>
</comment>
<comment type="similarity">
    <text evidence="4">Belongs to the recoverin family.</text>
</comment>
<proteinExistence type="evidence at transcript level"/>
<name>NCLDB_DANRE</name>
<feature type="initiator methionine" description="Removed" evidence="2">
    <location>
        <position position="1"/>
    </location>
</feature>
<feature type="chain" id="PRO_0000362081" description="Neurocalcin-delta B">
    <location>
        <begin position="2"/>
        <end position="192"/>
    </location>
</feature>
<feature type="domain" description="EF-hand 1" evidence="3">
    <location>
        <begin position="60"/>
        <end position="95"/>
    </location>
</feature>
<feature type="domain" description="EF-hand 2" evidence="3">
    <location>
        <begin position="96"/>
        <end position="131"/>
    </location>
</feature>
<feature type="domain" description="EF-hand 3" evidence="3">
    <location>
        <begin position="144"/>
        <end position="179"/>
    </location>
</feature>
<feature type="binding site" evidence="3">
    <location>
        <position position="73"/>
    </location>
    <ligand>
        <name>Ca(2+)</name>
        <dbReference type="ChEBI" id="CHEBI:29108"/>
        <label>1</label>
    </ligand>
</feature>
<feature type="binding site" evidence="3">
    <location>
        <position position="75"/>
    </location>
    <ligand>
        <name>Ca(2+)</name>
        <dbReference type="ChEBI" id="CHEBI:29108"/>
        <label>1</label>
    </ligand>
</feature>
<feature type="binding site" evidence="3">
    <location>
        <position position="77"/>
    </location>
    <ligand>
        <name>Ca(2+)</name>
        <dbReference type="ChEBI" id="CHEBI:29108"/>
        <label>1</label>
    </ligand>
</feature>
<feature type="binding site" evidence="3">
    <location>
        <position position="79"/>
    </location>
    <ligand>
        <name>Ca(2+)</name>
        <dbReference type="ChEBI" id="CHEBI:29108"/>
        <label>1</label>
    </ligand>
</feature>
<feature type="binding site" evidence="3">
    <location>
        <position position="84"/>
    </location>
    <ligand>
        <name>Ca(2+)</name>
        <dbReference type="ChEBI" id="CHEBI:29108"/>
        <label>1</label>
    </ligand>
</feature>
<feature type="binding site" evidence="3">
    <location>
        <position position="109"/>
    </location>
    <ligand>
        <name>Ca(2+)</name>
        <dbReference type="ChEBI" id="CHEBI:29108"/>
        <label>2</label>
    </ligand>
</feature>
<feature type="binding site" evidence="3">
    <location>
        <position position="111"/>
    </location>
    <ligand>
        <name>Ca(2+)</name>
        <dbReference type="ChEBI" id="CHEBI:29108"/>
        <label>2</label>
    </ligand>
</feature>
<feature type="binding site" evidence="3">
    <location>
        <position position="113"/>
    </location>
    <ligand>
        <name>Ca(2+)</name>
        <dbReference type="ChEBI" id="CHEBI:29108"/>
        <label>2</label>
    </ligand>
</feature>
<feature type="binding site" evidence="3">
    <location>
        <position position="115"/>
    </location>
    <ligand>
        <name>Ca(2+)</name>
        <dbReference type="ChEBI" id="CHEBI:29108"/>
        <label>2</label>
    </ligand>
</feature>
<feature type="binding site" evidence="3">
    <location>
        <position position="120"/>
    </location>
    <ligand>
        <name>Ca(2+)</name>
        <dbReference type="ChEBI" id="CHEBI:29108"/>
        <label>2</label>
    </ligand>
</feature>
<feature type="binding site" evidence="3">
    <location>
        <position position="157"/>
    </location>
    <ligand>
        <name>Ca(2+)</name>
        <dbReference type="ChEBI" id="CHEBI:29108"/>
        <label>3</label>
    </ligand>
</feature>
<feature type="binding site" evidence="3">
    <location>
        <position position="159"/>
    </location>
    <ligand>
        <name>Ca(2+)</name>
        <dbReference type="ChEBI" id="CHEBI:29108"/>
        <label>3</label>
    </ligand>
</feature>
<feature type="binding site" evidence="3">
    <location>
        <position position="161"/>
    </location>
    <ligand>
        <name>Ca(2+)</name>
        <dbReference type="ChEBI" id="CHEBI:29108"/>
        <label>3</label>
    </ligand>
</feature>
<feature type="binding site" evidence="3">
    <location>
        <position position="163"/>
    </location>
    <ligand>
        <name>Ca(2+)</name>
        <dbReference type="ChEBI" id="CHEBI:29108"/>
        <label>3</label>
    </ligand>
</feature>
<feature type="binding site" evidence="3">
    <location>
        <position position="168"/>
    </location>
    <ligand>
        <name>Ca(2+)</name>
        <dbReference type="ChEBI" id="CHEBI:29108"/>
        <label>3</label>
    </ligand>
</feature>
<feature type="lipid moiety-binding region" description="N-myristoyl glycine" evidence="2">
    <location>
        <position position="2"/>
    </location>
</feature>
<keyword id="KW-0106">Calcium</keyword>
<keyword id="KW-0449">Lipoprotein</keyword>
<keyword id="KW-0479">Metal-binding</keyword>
<keyword id="KW-0519">Myristate</keyword>
<keyword id="KW-1185">Reference proteome</keyword>
<keyword id="KW-0677">Repeat</keyword>
<sequence length="192" mass="21984">MGKQNSKLRPEVIQDLLDNTDFTEHEILEWYKGFLRDCPSGALSMDEFKKIYGNFFPYGDASKFAEHVFRTFDANGDGTIDFREFIIALSVTSRGRLDQKLKWAFSMYDLDGNGYISKAEMLEIVQAIYKMVSSVMKMPEDESTPEKRTDKIFRQMDTNRDGKLSLEEFVEGAKNDPSIVRLLQCDPSSAGQ</sequence>
<reference key="1">
    <citation type="journal article" date="2013" name="Nature">
        <title>The zebrafish reference genome sequence and its relationship to the human genome.</title>
        <authorList>
            <person name="Howe K."/>
            <person name="Clark M.D."/>
            <person name="Torroja C.F."/>
            <person name="Torrance J."/>
            <person name="Berthelot C."/>
            <person name="Muffato M."/>
            <person name="Collins J.E."/>
            <person name="Humphray S."/>
            <person name="McLaren K."/>
            <person name="Matthews L."/>
            <person name="McLaren S."/>
            <person name="Sealy I."/>
            <person name="Caccamo M."/>
            <person name="Churcher C."/>
            <person name="Scott C."/>
            <person name="Barrett J.C."/>
            <person name="Koch R."/>
            <person name="Rauch G.J."/>
            <person name="White S."/>
            <person name="Chow W."/>
            <person name="Kilian B."/>
            <person name="Quintais L.T."/>
            <person name="Guerra-Assuncao J.A."/>
            <person name="Zhou Y."/>
            <person name="Gu Y."/>
            <person name="Yen J."/>
            <person name="Vogel J.H."/>
            <person name="Eyre T."/>
            <person name="Redmond S."/>
            <person name="Banerjee R."/>
            <person name="Chi J."/>
            <person name="Fu B."/>
            <person name="Langley E."/>
            <person name="Maguire S.F."/>
            <person name="Laird G.K."/>
            <person name="Lloyd D."/>
            <person name="Kenyon E."/>
            <person name="Donaldson S."/>
            <person name="Sehra H."/>
            <person name="Almeida-King J."/>
            <person name="Loveland J."/>
            <person name="Trevanion S."/>
            <person name="Jones M."/>
            <person name="Quail M."/>
            <person name="Willey D."/>
            <person name="Hunt A."/>
            <person name="Burton J."/>
            <person name="Sims S."/>
            <person name="McLay K."/>
            <person name="Plumb B."/>
            <person name="Davis J."/>
            <person name="Clee C."/>
            <person name="Oliver K."/>
            <person name="Clark R."/>
            <person name="Riddle C."/>
            <person name="Elliot D."/>
            <person name="Threadgold G."/>
            <person name="Harden G."/>
            <person name="Ware D."/>
            <person name="Begum S."/>
            <person name="Mortimore B."/>
            <person name="Kerry G."/>
            <person name="Heath P."/>
            <person name="Phillimore B."/>
            <person name="Tracey A."/>
            <person name="Corby N."/>
            <person name="Dunn M."/>
            <person name="Johnson C."/>
            <person name="Wood J."/>
            <person name="Clark S."/>
            <person name="Pelan S."/>
            <person name="Griffiths G."/>
            <person name="Smith M."/>
            <person name="Glithero R."/>
            <person name="Howden P."/>
            <person name="Barker N."/>
            <person name="Lloyd C."/>
            <person name="Stevens C."/>
            <person name="Harley J."/>
            <person name="Holt K."/>
            <person name="Panagiotidis G."/>
            <person name="Lovell J."/>
            <person name="Beasley H."/>
            <person name="Henderson C."/>
            <person name="Gordon D."/>
            <person name="Auger K."/>
            <person name="Wright D."/>
            <person name="Collins J."/>
            <person name="Raisen C."/>
            <person name="Dyer L."/>
            <person name="Leung K."/>
            <person name="Robertson L."/>
            <person name="Ambridge K."/>
            <person name="Leongamornlert D."/>
            <person name="McGuire S."/>
            <person name="Gilderthorp R."/>
            <person name="Griffiths C."/>
            <person name="Manthravadi D."/>
            <person name="Nichol S."/>
            <person name="Barker G."/>
            <person name="Whitehead S."/>
            <person name="Kay M."/>
            <person name="Brown J."/>
            <person name="Murnane C."/>
            <person name="Gray E."/>
            <person name="Humphries M."/>
            <person name="Sycamore N."/>
            <person name="Barker D."/>
            <person name="Saunders D."/>
            <person name="Wallis J."/>
            <person name="Babbage A."/>
            <person name="Hammond S."/>
            <person name="Mashreghi-Mohammadi M."/>
            <person name="Barr L."/>
            <person name="Martin S."/>
            <person name="Wray P."/>
            <person name="Ellington A."/>
            <person name="Matthews N."/>
            <person name="Ellwood M."/>
            <person name="Woodmansey R."/>
            <person name="Clark G."/>
            <person name="Cooper J."/>
            <person name="Tromans A."/>
            <person name="Grafham D."/>
            <person name="Skuce C."/>
            <person name="Pandian R."/>
            <person name="Andrews R."/>
            <person name="Harrison E."/>
            <person name="Kimberley A."/>
            <person name="Garnett J."/>
            <person name="Fosker N."/>
            <person name="Hall R."/>
            <person name="Garner P."/>
            <person name="Kelly D."/>
            <person name="Bird C."/>
            <person name="Palmer S."/>
            <person name="Gehring I."/>
            <person name="Berger A."/>
            <person name="Dooley C.M."/>
            <person name="Ersan-Urun Z."/>
            <person name="Eser C."/>
            <person name="Geiger H."/>
            <person name="Geisler M."/>
            <person name="Karotki L."/>
            <person name="Kirn A."/>
            <person name="Konantz J."/>
            <person name="Konantz M."/>
            <person name="Oberlander M."/>
            <person name="Rudolph-Geiger S."/>
            <person name="Teucke M."/>
            <person name="Lanz C."/>
            <person name="Raddatz G."/>
            <person name="Osoegawa K."/>
            <person name="Zhu B."/>
            <person name="Rapp A."/>
            <person name="Widaa S."/>
            <person name="Langford C."/>
            <person name="Yang F."/>
            <person name="Schuster S.C."/>
            <person name="Carter N.P."/>
            <person name="Harrow J."/>
            <person name="Ning Z."/>
            <person name="Herrero J."/>
            <person name="Searle S.M."/>
            <person name="Enright A."/>
            <person name="Geisler R."/>
            <person name="Plasterk R.H."/>
            <person name="Lee C."/>
            <person name="Westerfield M."/>
            <person name="de Jong P.J."/>
            <person name="Zon L.I."/>
            <person name="Postlethwait J.H."/>
            <person name="Nusslein-Volhard C."/>
            <person name="Hubbard T.J."/>
            <person name="Roest Crollius H."/>
            <person name="Rogers J."/>
            <person name="Stemple D.L."/>
        </authorList>
    </citation>
    <scope>NUCLEOTIDE SEQUENCE [LARGE SCALE GENOMIC DNA]</scope>
    <source>
        <strain>Tuebingen</strain>
    </source>
</reference>
<reference key="2">
    <citation type="submission" date="2004-08" db="EMBL/GenBank/DDBJ databases">
        <authorList>
            <consortium name="NIH - Zebrafish Gene Collection (ZGC) project"/>
        </authorList>
    </citation>
    <scope>NUCLEOTIDE SEQUENCE [LARGE SCALE MRNA]</scope>
    <source>
        <tissue>Embryo</tissue>
    </source>
</reference>
<protein>
    <recommendedName>
        <fullName>Neurocalcin-delta B</fullName>
    </recommendedName>
</protein>
<accession>Q6AXL4</accession>
<organism>
    <name type="scientific">Danio rerio</name>
    <name type="common">Zebrafish</name>
    <name type="synonym">Brachydanio rerio</name>
    <dbReference type="NCBI Taxonomy" id="7955"/>
    <lineage>
        <taxon>Eukaryota</taxon>
        <taxon>Metazoa</taxon>
        <taxon>Chordata</taxon>
        <taxon>Craniata</taxon>
        <taxon>Vertebrata</taxon>
        <taxon>Euteleostomi</taxon>
        <taxon>Actinopterygii</taxon>
        <taxon>Neopterygii</taxon>
        <taxon>Teleostei</taxon>
        <taxon>Ostariophysi</taxon>
        <taxon>Cypriniformes</taxon>
        <taxon>Danionidae</taxon>
        <taxon>Danioninae</taxon>
        <taxon>Danio</taxon>
    </lineage>
</organism>
<evidence type="ECO:0000250" key="1"/>
<evidence type="ECO:0000255" key="2"/>
<evidence type="ECO:0000255" key="3">
    <source>
        <dbReference type="PROSITE-ProRule" id="PRU00448"/>
    </source>
</evidence>
<evidence type="ECO:0000305" key="4"/>